<sequence>MKKRVQSELSKLSDKSIILEKPRDRQFGHYATPIAFSLAKELRRSPMQIADELAKSFESSSIFEKVEPIKGYVNFKLSESFLDEYATWALKNESEFGKDEQGETILLEFVSANPTGPLHIGHARGAVLGEALSRLGKHLGNEIVKEYYINDAGNQIYLLGLSIYLAAKEELGQEVQWPQEYYRGDYIKDLAKEAIEEFGKEAFSDESLIDKLSEWGKEKMMELIVSNLAAVDIKFDHFVSEKALYEKWDEVFAILKEHDAVYEKDSKVWLKSSEYGDEKDRVVVREDGRPTYLAGDIIYHYDKFKRGFDRYINIWGADHHGYIARVKAAIKFLGFDPDKLEVLLAQMVSLLKGGEPYKMSKRAGNFILMSEVVEEIGADALKFMFLSKKADTHLEFDVDMLKKEDASNPVYYINYAHARINSVLEKAGKSAGEVIDTPLKDLNEDAKDLLFEALILPEIIEDAFAKRELQRLTDYLKALAAQFHSFYNKHKVIGSEYEDRYLKLFLVVALSIRVGLRLLGIEAKKRM</sequence>
<evidence type="ECO:0000255" key="1">
    <source>
        <dbReference type="HAMAP-Rule" id="MF_00123"/>
    </source>
</evidence>
<accession>A6Q543</accession>
<protein>
    <recommendedName>
        <fullName evidence="1">Arginine--tRNA ligase</fullName>
        <ecNumber evidence="1">6.1.1.19</ecNumber>
    </recommendedName>
    <alternativeName>
        <fullName evidence="1">Arginyl-tRNA synthetase</fullName>
        <shortName evidence="1">ArgRS</shortName>
    </alternativeName>
</protein>
<gene>
    <name evidence="1" type="primary">argS</name>
    <name type="ordered locus">NIS_1495</name>
</gene>
<comment type="catalytic activity">
    <reaction evidence="1">
        <text>tRNA(Arg) + L-arginine + ATP = L-arginyl-tRNA(Arg) + AMP + diphosphate</text>
        <dbReference type="Rhea" id="RHEA:20301"/>
        <dbReference type="Rhea" id="RHEA-COMP:9658"/>
        <dbReference type="Rhea" id="RHEA-COMP:9673"/>
        <dbReference type="ChEBI" id="CHEBI:30616"/>
        <dbReference type="ChEBI" id="CHEBI:32682"/>
        <dbReference type="ChEBI" id="CHEBI:33019"/>
        <dbReference type="ChEBI" id="CHEBI:78442"/>
        <dbReference type="ChEBI" id="CHEBI:78513"/>
        <dbReference type="ChEBI" id="CHEBI:456215"/>
        <dbReference type="EC" id="6.1.1.19"/>
    </reaction>
</comment>
<comment type="subunit">
    <text evidence="1">Monomer.</text>
</comment>
<comment type="subcellular location">
    <subcellularLocation>
        <location evidence="1">Cytoplasm</location>
    </subcellularLocation>
</comment>
<comment type="similarity">
    <text evidence="1">Belongs to the class-I aminoacyl-tRNA synthetase family.</text>
</comment>
<name>SYR_NITSB</name>
<keyword id="KW-0030">Aminoacyl-tRNA synthetase</keyword>
<keyword id="KW-0067">ATP-binding</keyword>
<keyword id="KW-0963">Cytoplasm</keyword>
<keyword id="KW-0436">Ligase</keyword>
<keyword id="KW-0547">Nucleotide-binding</keyword>
<keyword id="KW-0648">Protein biosynthesis</keyword>
<keyword id="KW-1185">Reference proteome</keyword>
<organism>
    <name type="scientific">Nitratiruptor sp. (strain SB155-2)</name>
    <dbReference type="NCBI Taxonomy" id="387092"/>
    <lineage>
        <taxon>Bacteria</taxon>
        <taxon>Pseudomonadati</taxon>
        <taxon>Campylobacterota</taxon>
        <taxon>Epsilonproteobacteria</taxon>
        <taxon>Nautiliales</taxon>
        <taxon>Nitratiruptoraceae</taxon>
        <taxon>Nitratiruptor</taxon>
    </lineage>
</organism>
<feature type="chain" id="PRO_1000018078" description="Arginine--tRNA ligase">
    <location>
        <begin position="1"/>
        <end position="527"/>
    </location>
</feature>
<feature type="short sequence motif" description="'HIGH' region">
    <location>
        <begin position="112"/>
        <end position="122"/>
    </location>
</feature>
<proteinExistence type="inferred from homology"/>
<dbReference type="EC" id="6.1.1.19" evidence="1"/>
<dbReference type="EMBL" id="AP009178">
    <property type="protein sequence ID" value="BAF70602.1"/>
    <property type="molecule type" value="Genomic_DNA"/>
</dbReference>
<dbReference type="RefSeq" id="WP_012082865.1">
    <property type="nucleotide sequence ID" value="NC_009662.1"/>
</dbReference>
<dbReference type="SMR" id="A6Q543"/>
<dbReference type="FunCoup" id="A6Q543">
    <property type="interactions" value="440"/>
</dbReference>
<dbReference type="STRING" id="387092.NIS_1495"/>
<dbReference type="KEGG" id="nis:NIS_1495"/>
<dbReference type="eggNOG" id="COG0018">
    <property type="taxonomic scope" value="Bacteria"/>
</dbReference>
<dbReference type="HOGENOM" id="CLU_006406_0_1_7"/>
<dbReference type="InParanoid" id="A6Q543"/>
<dbReference type="OrthoDB" id="9803211at2"/>
<dbReference type="Proteomes" id="UP000001118">
    <property type="component" value="Chromosome"/>
</dbReference>
<dbReference type="GO" id="GO:0005737">
    <property type="term" value="C:cytoplasm"/>
    <property type="evidence" value="ECO:0007669"/>
    <property type="project" value="UniProtKB-SubCell"/>
</dbReference>
<dbReference type="GO" id="GO:0004814">
    <property type="term" value="F:arginine-tRNA ligase activity"/>
    <property type="evidence" value="ECO:0007669"/>
    <property type="project" value="UniProtKB-UniRule"/>
</dbReference>
<dbReference type="GO" id="GO:0005524">
    <property type="term" value="F:ATP binding"/>
    <property type="evidence" value="ECO:0007669"/>
    <property type="project" value="UniProtKB-UniRule"/>
</dbReference>
<dbReference type="GO" id="GO:0006420">
    <property type="term" value="P:arginyl-tRNA aminoacylation"/>
    <property type="evidence" value="ECO:0007669"/>
    <property type="project" value="UniProtKB-UniRule"/>
</dbReference>
<dbReference type="CDD" id="cd00671">
    <property type="entry name" value="ArgRS_core"/>
    <property type="match status" value="1"/>
</dbReference>
<dbReference type="FunFam" id="3.40.50.620:FF:000062">
    <property type="entry name" value="Arginine--tRNA ligase"/>
    <property type="match status" value="1"/>
</dbReference>
<dbReference type="Gene3D" id="3.30.1360.70">
    <property type="entry name" value="Arginyl tRNA synthetase N-terminal domain"/>
    <property type="match status" value="1"/>
</dbReference>
<dbReference type="Gene3D" id="3.40.50.620">
    <property type="entry name" value="HUPs"/>
    <property type="match status" value="1"/>
</dbReference>
<dbReference type="Gene3D" id="1.10.730.10">
    <property type="entry name" value="Isoleucyl-tRNA Synthetase, Domain 1"/>
    <property type="match status" value="1"/>
</dbReference>
<dbReference type="HAMAP" id="MF_00123">
    <property type="entry name" value="Arg_tRNA_synth"/>
    <property type="match status" value="1"/>
</dbReference>
<dbReference type="InterPro" id="IPR001412">
    <property type="entry name" value="aa-tRNA-synth_I_CS"/>
</dbReference>
<dbReference type="InterPro" id="IPR001278">
    <property type="entry name" value="Arg-tRNA-ligase"/>
</dbReference>
<dbReference type="InterPro" id="IPR005148">
    <property type="entry name" value="Arg-tRNA-synth_N"/>
</dbReference>
<dbReference type="InterPro" id="IPR036695">
    <property type="entry name" value="Arg-tRNA-synth_N_sf"/>
</dbReference>
<dbReference type="InterPro" id="IPR035684">
    <property type="entry name" value="ArgRS_core"/>
</dbReference>
<dbReference type="InterPro" id="IPR008909">
    <property type="entry name" value="DALR_anticod-bd"/>
</dbReference>
<dbReference type="InterPro" id="IPR014729">
    <property type="entry name" value="Rossmann-like_a/b/a_fold"/>
</dbReference>
<dbReference type="InterPro" id="IPR009080">
    <property type="entry name" value="tRNAsynth_Ia_anticodon-bd"/>
</dbReference>
<dbReference type="NCBIfam" id="TIGR00456">
    <property type="entry name" value="argS"/>
    <property type="match status" value="1"/>
</dbReference>
<dbReference type="PANTHER" id="PTHR11956:SF5">
    <property type="entry name" value="ARGININE--TRNA LIGASE, CYTOPLASMIC"/>
    <property type="match status" value="1"/>
</dbReference>
<dbReference type="PANTHER" id="PTHR11956">
    <property type="entry name" value="ARGINYL-TRNA SYNTHETASE"/>
    <property type="match status" value="1"/>
</dbReference>
<dbReference type="Pfam" id="PF03485">
    <property type="entry name" value="Arg_tRNA_synt_N"/>
    <property type="match status" value="1"/>
</dbReference>
<dbReference type="Pfam" id="PF05746">
    <property type="entry name" value="DALR_1"/>
    <property type="match status" value="1"/>
</dbReference>
<dbReference type="Pfam" id="PF00750">
    <property type="entry name" value="tRNA-synt_1d"/>
    <property type="match status" value="1"/>
</dbReference>
<dbReference type="PRINTS" id="PR01038">
    <property type="entry name" value="TRNASYNTHARG"/>
</dbReference>
<dbReference type="SMART" id="SM01016">
    <property type="entry name" value="Arg_tRNA_synt_N"/>
    <property type="match status" value="1"/>
</dbReference>
<dbReference type="SMART" id="SM00836">
    <property type="entry name" value="DALR_1"/>
    <property type="match status" value="1"/>
</dbReference>
<dbReference type="SUPFAM" id="SSF47323">
    <property type="entry name" value="Anticodon-binding domain of a subclass of class I aminoacyl-tRNA synthetases"/>
    <property type="match status" value="1"/>
</dbReference>
<dbReference type="SUPFAM" id="SSF55190">
    <property type="entry name" value="Arginyl-tRNA synthetase (ArgRS), N-terminal 'additional' domain"/>
    <property type="match status" value="1"/>
</dbReference>
<dbReference type="SUPFAM" id="SSF52374">
    <property type="entry name" value="Nucleotidylyl transferase"/>
    <property type="match status" value="1"/>
</dbReference>
<dbReference type="PROSITE" id="PS00178">
    <property type="entry name" value="AA_TRNA_LIGASE_I"/>
    <property type="match status" value="1"/>
</dbReference>
<reference key="1">
    <citation type="journal article" date="2007" name="Proc. Natl. Acad. Sci. U.S.A.">
        <title>Deep-sea vent epsilon-proteobacterial genomes provide insights into emergence of pathogens.</title>
        <authorList>
            <person name="Nakagawa S."/>
            <person name="Takaki Y."/>
            <person name="Shimamura S."/>
            <person name="Reysenbach A.-L."/>
            <person name="Takai K."/>
            <person name="Horikoshi K."/>
        </authorList>
    </citation>
    <scope>NUCLEOTIDE SEQUENCE [LARGE SCALE GENOMIC DNA]</scope>
    <source>
        <strain>SB155-2</strain>
    </source>
</reference>